<feature type="chain" id="PRO_0000243369" description="Dephospho-CoA kinase">
    <location>
        <begin position="1"/>
        <end position="197"/>
    </location>
</feature>
<feature type="domain" description="DPCK" evidence="1">
    <location>
        <begin position="3"/>
        <end position="197"/>
    </location>
</feature>
<feature type="binding site" evidence="1">
    <location>
        <begin position="11"/>
        <end position="16"/>
    </location>
    <ligand>
        <name>ATP</name>
        <dbReference type="ChEBI" id="CHEBI:30616"/>
    </ligand>
</feature>
<reference key="1">
    <citation type="journal article" date="2005" name="Nat. Biotechnol.">
        <title>The genome sequence of the ethanologenic bacterium Zymomonas mobilis ZM4.</title>
        <authorList>
            <person name="Seo J.-S."/>
            <person name="Chong H."/>
            <person name="Park H.S."/>
            <person name="Yoon K.-O."/>
            <person name="Jung C."/>
            <person name="Kim J.J."/>
            <person name="Hong J.H."/>
            <person name="Kim H."/>
            <person name="Kim J.-H."/>
            <person name="Kil J.-I."/>
            <person name="Park C.J."/>
            <person name="Oh H.-M."/>
            <person name="Lee J.-S."/>
            <person name="Jin S.-J."/>
            <person name="Um H.-W."/>
            <person name="Lee H.-J."/>
            <person name="Oh S.-J."/>
            <person name="Kim J.Y."/>
            <person name="Kang H.L."/>
            <person name="Lee S.Y."/>
            <person name="Lee K.J."/>
            <person name="Kang H.S."/>
        </authorList>
    </citation>
    <scope>NUCLEOTIDE SEQUENCE [LARGE SCALE GENOMIC DNA]</scope>
    <source>
        <strain>ATCC 31821 / ZM4 / CP4</strain>
    </source>
</reference>
<proteinExistence type="inferred from homology"/>
<name>COAE_ZYMMO</name>
<comment type="function">
    <text evidence="1">Catalyzes the phosphorylation of the 3'-hydroxyl group of dephosphocoenzyme A to form coenzyme A.</text>
</comment>
<comment type="catalytic activity">
    <reaction evidence="1">
        <text>3'-dephospho-CoA + ATP = ADP + CoA + H(+)</text>
        <dbReference type="Rhea" id="RHEA:18245"/>
        <dbReference type="ChEBI" id="CHEBI:15378"/>
        <dbReference type="ChEBI" id="CHEBI:30616"/>
        <dbReference type="ChEBI" id="CHEBI:57287"/>
        <dbReference type="ChEBI" id="CHEBI:57328"/>
        <dbReference type="ChEBI" id="CHEBI:456216"/>
        <dbReference type="EC" id="2.7.1.24"/>
    </reaction>
</comment>
<comment type="pathway">
    <text evidence="1">Cofactor biosynthesis; coenzyme A biosynthesis; CoA from (R)-pantothenate: step 5/5.</text>
</comment>
<comment type="subcellular location">
    <subcellularLocation>
        <location evidence="1">Cytoplasm</location>
    </subcellularLocation>
</comment>
<comment type="similarity">
    <text evidence="1">Belongs to the CoaE family.</text>
</comment>
<gene>
    <name evidence="1" type="primary">coaE</name>
    <name type="ordered locus">ZMO0040</name>
</gene>
<protein>
    <recommendedName>
        <fullName evidence="1">Dephospho-CoA kinase</fullName>
        <ecNumber evidence="1">2.7.1.24</ecNumber>
    </recommendedName>
    <alternativeName>
        <fullName evidence="1">Dephosphocoenzyme A kinase</fullName>
    </alternativeName>
</protein>
<sequence>MIILGLTGSIAMGKSTVSRLFAQMKRPVFDADKVVHQLQAPNGRLLSAIGQAFPGVIDEKGVNRQKLGAQLLQKPEGFRRLEAIIHPAVVEELHLFLRKNRSHPLVIVDIPLLFEAGFTRSVDYIAVVSAPYWIQKRRAVSRPNMTESRFRGLLARQWPDRKKRQQADFIIENGRNIIALAAQVRQITGCLVGQGSR</sequence>
<evidence type="ECO:0000255" key="1">
    <source>
        <dbReference type="HAMAP-Rule" id="MF_00376"/>
    </source>
</evidence>
<accession>Q5NRJ0</accession>
<dbReference type="EC" id="2.7.1.24" evidence="1"/>
<dbReference type="EMBL" id="AE008692">
    <property type="protein sequence ID" value="AAV88664.1"/>
    <property type="molecule type" value="Genomic_DNA"/>
</dbReference>
<dbReference type="RefSeq" id="WP_011240025.1">
    <property type="nucleotide sequence ID" value="NZ_CP035711.1"/>
</dbReference>
<dbReference type="SMR" id="Q5NRJ0"/>
<dbReference type="STRING" id="264203.ZMO0040"/>
<dbReference type="KEGG" id="zmo:ZMO0040"/>
<dbReference type="eggNOG" id="COG0237">
    <property type="taxonomic scope" value="Bacteria"/>
</dbReference>
<dbReference type="HOGENOM" id="CLU_057180_3_0_5"/>
<dbReference type="UniPathway" id="UPA00241">
    <property type="reaction ID" value="UER00356"/>
</dbReference>
<dbReference type="Proteomes" id="UP000001173">
    <property type="component" value="Chromosome"/>
</dbReference>
<dbReference type="GO" id="GO:0005737">
    <property type="term" value="C:cytoplasm"/>
    <property type="evidence" value="ECO:0007669"/>
    <property type="project" value="UniProtKB-SubCell"/>
</dbReference>
<dbReference type="GO" id="GO:0005524">
    <property type="term" value="F:ATP binding"/>
    <property type="evidence" value="ECO:0007669"/>
    <property type="project" value="UniProtKB-UniRule"/>
</dbReference>
<dbReference type="GO" id="GO:0004140">
    <property type="term" value="F:dephospho-CoA kinase activity"/>
    <property type="evidence" value="ECO:0007669"/>
    <property type="project" value="UniProtKB-UniRule"/>
</dbReference>
<dbReference type="GO" id="GO:0015937">
    <property type="term" value="P:coenzyme A biosynthetic process"/>
    <property type="evidence" value="ECO:0007669"/>
    <property type="project" value="UniProtKB-UniRule"/>
</dbReference>
<dbReference type="CDD" id="cd02022">
    <property type="entry name" value="DPCK"/>
    <property type="match status" value="1"/>
</dbReference>
<dbReference type="Gene3D" id="3.40.50.300">
    <property type="entry name" value="P-loop containing nucleotide triphosphate hydrolases"/>
    <property type="match status" value="1"/>
</dbReference>
<dbReference type="HAMAP" id="MF_00376">
    <property type="entry name" value="Dephospho_CoA_kinase"/>
    <property type="match status" value="1"/>
</dbReference>
<dbReference type="InterPro" id="IPR001977">
    <property type="entry name" value="Depp_CoAkinase"/>
</dbReference>
<dbReference type="InterPro" id="IPR027417">
    <property type="entry name" value="P-loop_NTPase"/>
</dbReference>
<dbReference type="NCBIfam" id="TIGR00152">
    <property type="entry name" value="dephospho-CoA kinase"/>
    <property type="match status" value="1"/>
</dbReference>
<dbReference type="PANTHER" id="PTHR10695:SF46">
    <property type="entry name" value="BIFUNCTIONAL COENZYME A SYNTHASE-RELATED"/>
    <property type="match status" value="1"/>
</dbReference>
<dbReference type="PANTHER" id="PTHR10695">
    <property type="entry name" value="DEPHOSPHO-COA KINASE-RELATED"/>
    <property type="match status" value="1"/>
</dbReference>
<dbReference type="Pfam" id="PF01121">
    <property type="entry name" value="CoaE"/>
    <property type="match status" value="1"/>
</dbReference>
<dbReference type="SUPFAM" id="SSF52540">
    <property type="entry name" value="P-loop containing nucleoside triphosphate hydrolases"/>
    <property type="match status" value="1"/>
</dbReference>
<dbReference type="PROSITE" id="PS51219">
    <property type="entry name" value="DPCK"/>
    <property type="match status" value="1"/>
</dbReference>
<organism>
    <name type="scientific">Zymomonas mobilis subsp. mobilis (strain ATCC 31821 / ZM4 / CP4)</name>
    <dbReference type="NCBI Taxonomy" id="264203"/>
    <lineage>
        <taxon>Bacteria</taxon>
        <taxon>Pseudomonadati</taxon>
        <taxon>Pseudomonadota</taxon>
        <taxon>Alphaproteobacteria</taxon>
        <taxon>Sphingomonadales</taxon>
        <taxon>Zymomonadaceae</taxon>
        <taxon>Zymomonas</taxon>
    </lineage>
</organism>
<keyword id="KW-0067">ATP-binding</keyword>
<keyword id="KW-0173">Coenzyme A biosynthesis</keyword>
<keyword id="KW-0963">Cytoplasm</keyword>
<keyword id="KW-0418">Kinase</keyword>
<keyword id="KW-0547">Nucleotide-binding</keyword>
<keyword id="KW-1185">Reference proteome</keyword>
<keyword id="KW-0808">Transferase</keyword>